<sequence>MEDYALTFGINPFIALMIQPIVTMTVVDNQGLGLPVDIQHKAKPSPKASQMLPPDLGPPSFQNLLSPSEKLEPWDPGMRKLTVQTCGLTFIHPAGHGLCHPTAEASAETLSSTALNRPSVREGACNEKSTENKKPQDSVLWSHSRWFQGN</sequence>
<protein>
    <recommendedName>
        <fullName>Putative solute carrier family 19 member 4</fullName>
    </recommendedName>
    <alternativeName>
        <fullName>Folate transporter-like protein C2orf83</fullName>
    </alternativeName>
    <alternativeName>
        <fullName evidence="6">Solute carrier family 19 member 4, pseudogene</fullName>
    </alternativeName>
</protein>
<gene>
    <name evidence="6" type="primary">SLC19A4P</name>
    <name type="synonym">C2orf83</name>
</gene>
<feature type="chain" id="PRO_0000320550" description="Putative solute carrier family 19 member 4">
    <location>
        <begin position="1"/>
        <end position="150"/>
    </location>
</feature>
<feature type="region of interest" description="Disordered" evidence="1">
    <location>
        <begin position="118"/>
        <end position="137"/>
    </location>
</feature>
<feature type="compositionally biased region" description="Basic and acidic residues" evidence="1">
    <location>
        <begin position="124"/>
        <end position="136"/>
    </location>
</feature>
<feature type="splice variant" id="VSP_045403" description="In isoform 2." evidence="4">
    <original>LLSPSEKLEPWDPGMRKLTVQTCGLTFIHPAGHGLCHPTAEASAETLSSTALNRPSVREGACNEKSTENKKPQDSVLWSHSRWFQGN</original>
    <variation>CFTCRTAPSLVMVLSWKSGVRREVPVHPSYAKY</variation>
    <location>
        <begin position="64"/>
        <end position="150"/>
    </location>
</feature>
<feature type="sequence variant" id="VAR_061865" description="In dbSNP:rs28739019.">
    <original>S</original>
    <variation>L</variation>
    <location>
        <position position="45"/>
    </location>
</feature>
<feature type="sequence variant" id="VAR_039201" description="In dbSNP:rs2138402." evidence="2 3">
    <original>E</original>
    <variation>Q</variation>
    <location>
        <position position="104"/>
    </location>
</feature>
<feature type="sequence conflict" description="In Ref. 1; AK055355." evidence="5" ref="1">
    <original>N</original>
    <variation>D</variation>
    <location>
        <position position="11"/>
    </location>
</feature>
<organism>
    <name type="scientific">Homo sapiens</name>
    <name type="common">Human</name>
    <dbReference type="NCBI Taxonomy" id="9606"/>
    <lineage>
        <taxon>Eukaryota</taxon>
        <taxon>Metazoa</taxon>
        <taxon>Chordata</taxon>
        <taxon>Craniata</taxon>
        <taxon>Vertebrata</taxon>
        <taxon>Euteleostomi</taxon>
        <taxon>Mammalia</taxon>
        <taxon>Eutheria</taxon>
        <taxon>Euarchontoglires</taxon>
        <taxon>Primates</taxon>
        <taxon>Haplorrhini</taxon>
        <taxon>Catarrhini</taxon>
        <taxon>Hominidae</taxon>
        <taxon>Homo</taxon>
    </lineage>
</organism>
<proteinExistence type="evidence at protein level"/>
<keyword id="KW-0025">Alternative splicing</keyword>
<keyword id="KW-1185">Reference proteome</keyword>
<name>CB083_HUMAN</name>
<dbReference type="EMBL" id="AK055355">
    <property type="status" value="NOT_ANNOTATED_CDS"/>
    <property type="molecule type" value="mRNA"/>
</dbReference>
<dbReference type="EMBL" id="AL359944">
    <property type="protein sequence ID" value="CAB95774.1"/>
    <property type="status" value="ALT_SEQ"/>
    <property type="molecule type" value="mRNA"/>
</dbReference>
<dbReference type="EMBL" id="CR749679">
    <property type="protein sequence ID" value="CAH18470.1"/>
    <property type="status" value="ALT_SEQ"/>
    <property type="molecule type" value="mRNA"/>
</dbReference>
<dbReference type="EMBL" id="AC064853">
    <property type="protein sequence ID" value="AAX93156.1"/>
    <property type="molecule type" value="Genomic_DNA"/>
</dbReference>
<dbReference type="EMBL" id="CH471063">
    <property type="protein sequence ID" value="EAW70873.1"/>
    <property type="molecule type" value="Genomic_DNA"/>
</dbReference>
<dbReference type="EMBL" id="CH471063">
    <property type="protein sequence ID" value="EAW70874.1"/>
    <property type="molecule type" value="Genomic_DNA"/>
</dbReference>
<dbReference type="EMBL" id="BC131618">
    <property type="protein sequence ID" value="AAI31619.1"/>
    <property type="molecule type" value="mRNA"/>
</dbReference>
<dbReference type="RefSeq" id="NP_001155955.1">
    <property type="nucleotide sequence ID" value="NM_001162483.1"/>
</dbReference>
<dbReference type="RefSeq" id="NP_064546.3">
    <property type="nucleotide sequence ID" value="NM_020161.3"/>
</dbReference>
<dbReference type="SMR" id="Q53S99"/>
<dbReference type="BioGRID" id="121246">
    <property type="interactions" value="7"/>
</dbReference>
<dbReference type="IntAct" id="Q53S99">
    <property type="interactions" value="1"/>
</dbReference>
<dbReference type="STRING" id="9606.ENSP00000493351"/>
<dbReference type="iPTMnet" id="Q53S99"/>
<dbReference type="BioMuta" id="C2orf83"/>
<dbReference type="PaxDb" id="9606-ENSP00000264387"/>
<dbReference type="DNASU" id="56918"/>
<dbReference type="UCSC" id="uc002vph.4">
    <molecule id="Q53S99-1"/>
    <property type="organism name" value="human"/>
</dbReference>
<dbReference type="AGR" id="HGNC:25344"/>
<dbReference type="DisGeNET" id="56918"/>
<dbReference type="GeneCards" id="SLC19A4P"/>
<dbReference type="HGNC" id="HGNC:25344">
    <property type="gene designation" value="SLC19A4P"/>
</dbReference>
<dbReference type="neXtProt" id="NX_Q53S99"/>
<dbReference type="PharmGKB" id="PA164717149"/>
<dbReference type="VEuPathDB" id="HostDB:ENSG00000042304"/>
<dbReference type="eggNOG" id="KOG3810">
    <property type="taxonomic scope" value="Eukaryota"/>
</dbReference>
<dbReference type="HOGENOM" id="CLU_1791296_0_0_1"/>
<dbReference type="InParanoid" id="Q53S99"/>
<dbReference type="OMA" id="PWDPGMR"/>
<dbReference type="PAN-GO" id="Q53S99">
    <property type="GO annotations" value="0 GO annotations based on evolutionary models"/>
</dbReference>
<dbReference type="PhylomeDB" id="Q53S99"/>
<dbReference type="TreeFam" id="TF341245"/>
<dbReference type="PathwayCommons" id="Q53S99"/>
<dbReference type="SignaLink" id="Q53S99"/>
<dbReference type="BioGRID-ORCS" id="56918">
    <property type="hits" value="10 hits in 1106 CRISPR screens"/>
</dbReference>
<dbReference type="ChiTaRS" id="C2orf83">
    <property type="organism name" value="human"/>
</dbReference>
<dbReference type="GenomeRNAi" id="56918"/>
<dbReference type="Pharos" id="Q53S99">
    <property type="development level" value="Tdark"/>
</dbReference>
<dbReference type="PRO" id="PR:Q53S99"/>
<dbReference type="Proteomes" id="UP000005640">
    <property type="component" value="Chromosome 2"/>
</dbReference>
<dbReference type="RNAct" id="Q53S99">
    <property type="molecule type" value="protein"/>
</dbReference>
<dbReference type="GO" id="GO:0016020">
    <property type="term" value="C:membrane"/>
    <property type="evidence" value="ECO:0007669"/>
    <property type="project" value="InterPro"/>
</dbReference>
<dbReference type="GO" id="GO:0090482">
    <property type="term" value="F:vitamin transmembrane transporter activity"/>
    <property type="evidence" value="ECO:0007669"/>
    <property type="project" value="InterPro"/>
</dbReference>
<dbReference type="InterPro" id="IPR002666">
    <property type="entry name" value="Folate_carrier"/>
</dbReference>
<dbReference type="Pfam" id="PF01770">
    <property type="entry name" value="Folate_carrier"/>
    <property type="match status" value="1"/>
</dbReference>
<comment type="interaction">
    <interactant intactId="EBI-18232868">
        <id>Q53S99</id>
    </interactant>
    <interactant intactId="EBI-11524452">
        <id>Q8N9N5-2</id>
        <label>BANP</label>
    </interactant>
    <organismsDiffer>false</organismsDiffer>
    <experiments>3</experiments>
</comment>
<comment type="alternative products">
    <event type="alternative splicing"/>
    <isoform>
        <id>Q53S99-1</id>
        <name>1</name>
        <sequence type="displayed"/>
    </isoform>
    <isoform>
        <id>Q53S99-2</id>
        <name>2</name>
        <sequence type="described" ref="VSP_045403"/>
    </isoform>
</comment>
<comment type="similarity">
    <text evidence="5">Belongs to the reduced folate carrier (RFC) transporter (TC 2.A.48) family.</text>
</comment>
<comment type="caution">
    <text evidence="5">Although related to reduced folate carrier family, it lacks transmembrane domains, suggesting that it has probably no transporter function. Defined as a pseudogene by HGNC.</text>
</comment>
<comment type="sequence caution" evidence="5">
    <conflict type="erroneous termination">
        <sequence resource="EMBL-CDS" id="CAB95774"/>
    </conflict>
    <text>Truncated C-terminus.</text>
</comment>
<comment type="sequence caution" evidence="5">
    <conflict type="erroneous termination">
        <sequence resource="EMBL-CDS" id="CAH18470"/>
    </conflict>
    <text>Truncated C-terminus.</text>
</comment>
<accession>Q53S99</accession>
<accession>A2RRG6</accession>
<accession>B8ZZI8</accession>
<accession>Q9NPW4</accession>
<evidence type="ECO:0000256" key="1">
    <source>
        <dbReference type="SAM" id="MobiDB-lite"/>
    </source>
</evidence>
<evidence type="ECO:0000269" key="2">
    <source>
    </source>
</evidence>
<evidence type="ECO:0000269" key="3">
    <source ref="4"/>
</evidence>
<evidence type="ECO:0000303" key="4">
    <source>
    </source>
</evidence>
<evidence type="ECO:0000305" key="5"/>
<evidence type="ECO:0000312" key="6">
    <source>
        <dbReference type="HGNC" id="HGNC:25344"/>
    </source>
</evidence>
<reference key="1">
    <citation type="journal article" date="2004" name="Nat. Genet.">
        <title>Complete sequencing and characterization of 21,243 full-length human cDNAs.</title>
        <authorList>
            <person name="Ota T."/>
            <person name="Suzuki Y."/>
            <person name="Nishikawa T."/>
            <person name="Otsuki T."/>
            <person name="Sugiyama T."/>
            <person name="Irie R."/>
            <person name="Wakamatsu A."/>
            <person name="Hayashi K."/>
            <person name="Sato H."/>
            <person name="Nagai K."/>
            <person name="Kimura K."/>
            <person name="Makita H."/>
            <person name="Sekine M."/>
            <person name="Obayashi M."/>
            <person name="Nishi T."/>
            <person name="Shibahara T."/>
            <person name="Tanaka T."/>
            <person name="Ishii S."/>
            <person name="Yamamoto J."/>
            <person name="Saito K."/>
            <person name="Kawai Y."/>
            <person name="Isono Y."/>
            <person name="Nakamura Y."/>
            <person name="Nagahari K."/>
            <person name="Murakami K."/>
            <person name="Yasuda T."/>
            <person name="Iwayanagi T."/>
            <person name="Wagatsuma M."/>
            <person name="Shiratori A."/>
            <person name="Sudo H."/>
            <person name="Hosoiri T."/>
            <person name="Kaku Y."/>
            <person name="Kodaira H."/>
            <person name="Kondo H."/>
            <person name="Sugawara M."/>
            <person name="Takahashi M."/>
            <person name="Kanda K."/>
            <person name="Yokoi T."/>
            <person name="Furuya T."/>
            <person name="Kikkawa E."/>
            <person name="Omura Y."/>
            <person name="Abe K."/>
            <person name="Kamihara K."/>
            <person name="Katsuta N."/>
            <person name="Sato K."/>
            <person name="Tanikawa M."/>
            <person name="Yamazaki M."/>
            <person name="Ninomiya K."/>
            <person name="Ishibashi T."/>
            <person name="Yamashita H."/>
            <person name="Murakawa K."/>
            <person name="Fujimori K."/>
            <person name="Tanai H."/>
            <person name="Kimata M."/>
            <person name="Watanabe M."/>
            <person name="Hiraoka S."/>
            <person name="Chiba Y."/>
            <person name="Ishida S."/>
            <person name="Ono Y."/>
            <person name="Takiguchi S."/>
            <person name="Watanabe S."/>
            <person name="Yosida M."/>
            <person name="Hotuta T."/>
            <person name="Kusano J."/>
            <person name="Kanehori K."/>
            <person name="Takahashi-Fujii A."/>
            <person name="Hara H."/>
            <person name="Tanase T.-O."/>
            <person name="Nomura Y."/>
            <person name="Togiya S."/>
            <person name="Komai F."/>
            <person name="Hara R."/>
            <person name="Takeuchi K."/>
            <person name="Arita M."/>
            <person name="Imose N."/>
            <person name="Musashino K."/>
            <person name="Yuuki H."/>
            <person name="Oshima A."/>
            <person name="Sasaki N."/>
            <person name="Aotsuka S."/>
            <person name="Yoshikawa Y."/>
            <person name="Matsunawa H."/>
            <person name="Ichihara T."/>
            <person name="Shiohata N."/>
            <person name="Sano S."/>
            <person name="Moriya S."/>
            <person name="Momiyama H."/>
            <person name="Satoh N."/>
            <person name="Takami S."/>
            <person name="Terashima Y."/>
            <person name="Suzuki O."/>
            <person name="Nakagawa S."/>
            <person name="Senoh A."/>
            <person name="Mizoguchi H."/>
            <person name="Goto Y."/>
            <person name="Shimizu F."/>
            <person name="Wakebe H."/>
            <person name="Hishigaki H."/>
            <person name="Watanabe T."/>
            <person name="Sugiyama A."/>
            <person name="Takemoto M."/>
            <person name="Kawakami B."/>
            <person name="Yamazaki M."/>
            <person name="Watanabe K."/>
            <person name="Kumagai A."/>
            <person name="Itakura S."/>
            <person name="Fukuzumi Y."/>
            <person name="Fujimori Y."/>
            <person name="Komiyama M."/>
            <person name="Tashiro H."/>
            <person name="Tanigami A."/>
            <person name="Fujiwara T."/>
            <person name="Ono T."/>
            <person name="Yamada K."/>
            <person name="Fujii Y."/>
            <person name="Ozaki K."/>
            <person name="Hirao M."/>
            <person name="Ohmori Y."/>
            <person name="Kawabata A."/>
            <person name="Hikiji T."/>
            <person name="Kobatake N."/>
            <person name="Inagaki H."/>
            <person name="Ikema Y."/>
            <person name="Okamoto S."/>
            <person name="Okitani R."/>
            <person name="Kawakami T."/>
            <person name="Noguchi S."/>
            <person name="Itoh T."/>
            <person name="Shigeta K."/>
            <person name="Senba T."/>
            <person name="Matsumura K."/>
            <person name="Nakajima Y."/>
            <person name="Mizuno T."/>
            <person name="Morinaga M."/>
            <person name="Sasaki M."/>
            <person name="Togashi T."/>
            <person name="Oyama M."/>
            <person name="Hata H."/>
            <person name="Watanabe M."/>
            <person name="Komatsu T."/>
            <person name="Mizushima-Sugano J."/>
            <person name="Satoh T."/>
            <person name="Shirai Y."/>
            <person name="Takahashi Y."/>
            <person name="Nakagawa K."/>
            <person name="Okumura K."/>
            <person name="Nagase T."/>
            <person name="Nomura N."/>
            <person name="Kikuchi H."/>
            <person name="Masuho Y."/>
            <person name="Yamashita R."/>
            <person name="Nakai K."/>
            <person name="Yada T."/>
            <person name="Nakamura Y."/>
            <person name="Ohara O."/>
            <person name="Isogai T."/>
            <person name="Sugano S."/>
        </authorList>
    </citation>
    <scope>NUCLEOTIDE SEQUENCE [LARGE SCALE MRNA] (ISOFORM 2)</scope>
    <source>
        <tissue>Brain</tissue>
    </source>
</reference>
<reference key="2">
    <citation type="journal article" date="2007" name="BMC Genomics">
        <title>The full-ORF clone resource of the German cDNA consortium.</title>
        <authorList>
            <person name="Bechtel S."/>
            <person name="Rosenfelder H."/>
            <person name="Duda A."/>
            <person name="Schmidt C.P."/>
            <person name="Ernst U."/>
            <person name="Wellenreuther R."/>
            <person name="Mehrle A."/>
            <person name="Schuster C."/>
            <person name="Bahr A."/>
            <person name="Bloecker H."/>
            <person name="Heubner D."/>
            <person name="Hoerlein A."/>
            <person name="Michel G."/>
            <person name="Wedler H."/>
            <person name="Koehrer K."/>
            <person name="Ottenwaelder B."/>
            <person name="Poustka A."/>
            <person name="Wiemann S."/>
            <person name="Schupp I."/>
        </authorList>
    </citation>
    <scope>NUCLEOTIDE SEQUENCE [LARGE SCALE MRNA] (ISOFORM 1)</scope>
    <source>
        <tissue>Fetal brain</tissue>
    </source>
</reference>
<reference key="3">
    <citation type="journal article" date="2005" name="Nature">
        <title>Generation and annotation of the DNA sequences of human chromosomes 2 and 4.</title>
        <authorList>
            <person name="Hillier L.W."/>
            <person name="Graves T.A."/>
            <person name="Fulton R.S."/>
            <person name="Fulton L.A."/>
            <person name="Pepin K.H."/>
            <person name="Minx P."/>
            <person name="Wagner-McPherson C."/>
            <person name="Layman D."/>
            <person name="Wylie K."/>
            <person name="Sekhon M."/>
            <person name="Becker M.C."/>
            <person name="Fewell G.A."/>
            <person name="Delehaunty K.D."/>
            <person name="Miner T.L."/>
            <person name="Nash W.E."/>
            <person name="Kremitzki C."/>
            <person name="Oddy L."/>
            <person name="Du H."/>
            <person name="Sun H."/>
            <person name="Bradshaw-Cordum H."/>
            <person name="Ali J."/>
            <person name="Carter J."/>
            <person name="Cordes M."/>
            <person name="Harris A."/>
            <person name="Isak A."/>
            <person name="van Brunt A."/>
            <person name="Nguyen C."/>
            <person name="Du F."/>
            <person name="Courtney L."/>
            <person name="Kalicki J."/>
            <person name="Ozersky P."/>
            <person name="Abbott S."/>
            <person name="Armstrong J."/>
            <person name="Belter E.A."/>
            <person name="Caruso L."/>
            <person name="Cedroni M."/>
            <person name="Cotton M."/>
            <person name="Davidson T."/>
            <person name="Desai A."/>
            <person name="Elliott G."/>
            <person name="Erb T."/>
            <person name="Fronick C."/>
            <person name="Gaige T."/>
            <person name="Haakenson W."/>
            <person name="Haglund K."/>
            <person name="Holmes A."/>
            <person name="Harkins R."/>
            <person name="Kim K."/>
            <person name="Kruchowski S.S."/>
            <person name="Strong C.M."/>
            <person name="Grewal N."/>
            <person name="Goyea E."/>
            <person name="Hou S."/>
            <person name="Levy A."/>
            <person name="Martinka S."/>
            <person name="Mead K."/>
            <person name="McLellan M.D."/>
            <person name="Meyer R."/>
            <person name="Randall-Maher J."/>
            <person name="Tomlinson C."/>
            <person name="Dauphin-Kohlberg S."/>
            <person name="Kozlowicz-Reilly A."/>
            <person name="Shah N."/>
            <person name="Swearengen-Shahid S."/>
            <person name="Snider J."/>
            <person name="Strong J.T."/>
            <person name="Thompson J."/>
            <person name="Yoakum M."/>
            <person name="Leonard S."/>
            <person name="Pearman C."/>
            <person name="Trani L."/>
            <person name="Radionenko M."/>
            <person name="Waligorski J.E."/>
            <person name="Wang C."/>
            <person name="Rock S.M."/>
            <person name="Tin-Wollam A.-M."/>
            <person name="Maupin R."/>
            <person name="Latreille P."/>
            <person name="Wendl M.C."/>
            <person name="Yang S.-P."/>
            <person name="Pohl C."/>
            <person name="Wallis J.W."/>
            <person name="Spieth J."/>
            <person name="Bieri T.A."/>
            <person name="Berkowicz N."/>
            <person name="Nelson J.O."/>
            <person name="Osborne J."/>
            <person name="Ding L."/>
            <person name="Meyer R."/>
            <person name="Sabo A."/>
            <person name="Shotland Y."/>
            <person name="Sinha P."/>
            <person name="Wohldmann P.E."/>
            <person name="Cook L.L."/>
            <person name="Hickenbotham M.T."/>
            <person name="Eldred J."/>
            <person name="Williams D."/>
            <person name="Jones T.A."/>
            <person name="She X."/>
            <person name="Ciccarelli F.D."/>
            <person name="Izaurralde E."/>
            <person name="Taylor J."/>
            <person name="Schmutz J."/>
            <person name="Myers R.M."/>
            <person name="Cox D.R."/>
            <person name="Huang X."/>
            <person name="McPherson J.D."/>
            <person name="Mardis E.R."/>
            <person name="Clifton S.W."/>
            <person name="Warren W.C."/>
            <person name="Chinwalla A.T."/>
            <person name="Eddy S.R."/>
            <person name="Marra M.A."/>
            <person name="Ovcharenko I."/>
            <person name="Furey T.S."/>
            <person name="Miller W."/>
            <person name="Eichler E.E."/>
            <person name="Bork P."/>
            <person name="Suyama M."/>
            <person name="Torrents D."/>
            <person name="Waterston R.H."/>
            <person name="Wilson R.K."/>
        </authorList>
    </citation>
    <scope>NUCLEOTIDE SEQUENCE [LARGE SCALE GENOMIC DNA]</scope>
</reference>
<reference key="4">
    <citation type="submission" date="2005-07" db="EMBL/GenBank/DDBJ databases">
        <authorList>
            <person name="Mural R.J."/>
            <person name="Istrail S."/>
            <person name="Sutton G.G."/>
            <person name="Florea L."/>
            <person name="Halpern A.L."/>
            <person name="Mobarry C.M."/>
            <person name="Lippert R."/>
            <person name="Walenz B."/>
            <person name="Shatkay H."/>
            <person name="Dew I."/>
            <person name="Miller J.R."/>
            <person name="Flanigan M.J."/>
            <person name="Edwards N.J."/>
            <person name="Bolanos R."/>
            <person name="Fasulo D."/>
            <person name="Halldorsson B.V."/>
            <person name="Hannenhalli S."/>
            <person name="Turner R."/>
            <person name="Yooseph S."/>
            <person name="Lu F."/>
            <person name="Nusskern D.R."/>
            <person name="Shue B.C."/>
            <person name="Zheng X.H."/>
            <person name="Zhong F."/>
            <person name="Delcher A.L."/>
            <person name="Huson D.H."/>
            <person name="Kravitz S.A."/>
            <person name="Mouchard L."/>
            <person name="Reinert K."/>
            <person name="Remington K.A."/>
            <person name="Clark A.G."/>
            <person name="Waterman M.S."/>
            <person name="Eichler E.E."/>
            <person name="Adams M.D."/>
            <person name="Hunkapiller M.W."/>
            <person name="Myers E.W."/>
            <person name="Venter J.C."/>
        </authorList>
    </citation>
    <scope>NUCLEOTIDE SEQUENCE [LARGE SCALE GENOMIC DNA]</scope>
    <scope>VARIANT GLN-104</scope>
</reference>
<reference key="5">
    <citation type="journal article" date="2004" name="Genome Res.">
        <title>The status, quality, and expansion of the NIH full-length cDNA project: the Mammalian Gene Collection (MGC).</title>
        <authorList>
            <consortium name="The MGC Project Team"/>
        </authorList>
    </citation>
    <scope>NUCLEOTIDE SEQUENCE [LARGE SCALE MRNA] (ISOFORM 1)</scope>
    <scope>VARIANT GLN-104</scope>
</reference>